<feature type="chain" id="PRO_1000143830" description="Large ribosomal subunit protein bL21">
    <location>
        <begin position="1"/>
        <end position="108"/>
    </location>
</feature>
<comment type="function">
    <text evidence="1">This protein binds to 23S rRNA in the presence of protein L20.</text>
</comment>
<comment type="subunit">
    <text evidence="1">Part of the 50S ribosomal subunit. Contacts protein L20.</text>
</comment>
<comment type="similarity">
    <text evidence="1">Belongs to the bacterial ribosomal protein bL21 family.</text>
</comment>
<keyword id="KW-0687">Ribonucleoprotein</keyword>
<keyword id="KW-0689">Ribosomal protein</keyword>
<keyword id="KW-0694">RNA-binding</keyword>
<keyword id="KW-0699">rRNA-binding</keyword>
<reference key="1">
    <citation type="journal article" date="2008" name="DNA Res.">
        <title>The whole-genome sequencing of the obligate intracellular bacterium Orientia tsutsugamushi revealed massive gene amplification during reductive genome evolution.</title>
        <authorList>
            <person name="Nakayama K."/>
            <person name="Yamashita A."/>
            <person name="Kurokawa K."/>
            <person name="Morimoto T."/>
            <person name="Ogawa M."/>
            <person name="Fukuhara M."/>
            <person name="Urakami H."/>
            <person name="Ohnishi M."/>
            <person name="Uchiyama I."/>
            <person name="Ogura Y."/>
            <person name="Ooka T."/>
            <person name="Oshima K."/>
            <person name="Tamura A."/>
            <person name="Hattori M."/>
            <person name="Hayashi T."/>
        </authorList>
    </citation>
    <scope>NUCLEOTIDE SEQUENCE [LARGE SCALE GENOMIC DNA]</scope>
    <source>
        <strain>Ikeda</strain>
    </source>
</reference>
<dbReference type="EMBL" id="AP008981">
    <property type="protein sequence ID" value="BAG41204.1"/>
    <property type="molecule type" value="Genomic_DNA"/>
</dbReference>
<dbReference type="RefSeq" id="WP_012462168.1">
    <property type="nucleotide sequence ID" value="NC_010793.1"/>
</dbReference>
<dbReference type="SMR" id="B3CV07"/>
<dbReference type="KEGG" id="ott:OTT_1746"/>
<dbReference type="HOGENOM" id="CLU_061463_3_2_5"/>
<dbReference type="OrthoDB" id="9813334at2"/>
<dbReference type="Proteomes" id="UP000001033">
    <property type="component" value="Chromosome"/>
</dbReference>
<dbReference type="GO" id="GO:0005737">
    <property type="term" value="C:cytoplasm"/>
    <property type="evidence" value="ECO:0007669"/>
    <property type="project" value="UniProtKB-ARBA"/>
</dbReference>
<dbReference type="GO" id="GO:1990904">
    <property type="term" value="C:ribonucleoprotein complex"/>
    <property type="evidence" value="ECO:0007669"/>
    <property type="project" value="UniProtKB-KW"/>
</dbReference>
<dbReference type="GO" id="GO:0005840">
    <property type="term" value="C:ribosome"/>
    <property type="evidence" value="ECO:0007669"/>
    <property type="project" value="UniProtKB-KW"/>
</dbReference>
<dbReference type="GO" id="GO:0019843">
    <property type="term" value="F:rRNA binding"/>
    <property type="evidence" value="ECO:0007669"/>
    <property type="project" value="UniProtKB-UniRule"/>
</dbReference>
<dbReference type="GO" id="GO:0003735">
    <property type="term" value="F:structural constituent of ribosome"/>
    <property type="evidence" value="ECO:0007669"/>
    <property type="project" value="InterPro"/>
</dbReference>
<dbReference type="GO" id="GO:0006412">
    <property type="term" value="P:translation"/>
    <property type="evidence" value="ECO:0007669"/>
    <property type="project" value="UniProtKB-UniRule"/>
</dbReference>
<dbReference type="HAMAP" id="MF_01363">
    <property type="entry name" value="Ribosomal_bL21"/>
    <property type="match status" value="1"/>
</dbReference>
<dbReference type="InterPro" id="IPR028909">
    <property type="entry name" value="bL21-like"/>
</dbReference>
<dbReference type="InterPro" id="IPR036164">
    <property type="entry name" value="bL21-like_sf"/>
</dbReference>
<dbReference type="InterPro" id="IPR001787">
    <property type="entry name" value="Ribosomal_bL21"/>
</dbReference>
<dbReference type="InterPro" id="IPR018258">
    <property type="entry name" value="Ribosomal_bL21_CS"/>
</dbReference>
<dbReference type="NCBIfam" id="TIGR00061">
    <property type="entry name" value="L21"/>
    <property type="match status" value="1"/>
</dbReference>
<dbReference type="PANTHER" id="PTHR21349">
    <property type="entry name" value="50S RIBOSOMAL PROTEIN L21"/>
    <property type="match status" value="1"/>
</dbReference>
<dbReference type="PANTHER" id="PTHR21349:SF0">
    <property type="entry name" value="LARGE RIBOSOMAL SUBUNIT PROTEIN BL21M"/>
    <property type="match status" value="1"/>
</dbReference>
<dbReference type="Pfam" id="PF00829">
    <property type="entry name" value="Ribosomal_L21p"/>
    <property type="match status" value="1"/>
</dbReference>
<dbReference type="SUPFAM" id="SSF141091">
    <property type="entry name" value="L21p-like"/>
    <property type="match status" value="1"/>
</dbReference>
<dbReference type="PROSITE" id="PS01169">
    <property type="entry name" value="RIBOSOMAL_L21"/>
    <property type="match status" value="1"/>
</dbReference>
<accession>B3CV07</accession>
<name>RL21_ORITI</name>
<protein>
    <recommendedName>
        <fullName evidence="1">Large ribosomal subunit protein bL21</fullName>
    </recommendedName>
    <alternativeName>
        <fullName evidence="2">50S ribosomal protein L21</fullName>
    </alternativeName>
</protein>
<gene>
    <name evidence="1" type="primary">rplU</name>
    <name type="ordered locus">OTT_1746</name>
</gene>
<proteinExistence type="inferred from homology"/>
<organism>
    <name type="scientific">Orientia tsutsugamushi (strain Ikeda)</name>
    <name type="common">Rickettsia tsutsugamushi</name>
    <dbReference type="NCBI Taxonomy" id="334380"/>
    <lineage>
        <taxon>Bacteria</taxon>
        <taxon>Pseudomonadati</taxon>
        <taxon>Pseudomonadota</taxon>
        <taxon>Alphaproteobacteria</taxon>
        <taxon>Rickettsiales</taxon>
        <taxon>Rickettsiaceae</taxon>
        <taxon>Rickettsieae</taxon>
        <taxon>Orientia</taxon>
    </lineage>
</organism>
<evidence type="ECO:0000255" key="1">
    <source>
        <dbReference type="HAMAP-Rule" id="MF_01363"/>
    </source>
</evidence>
<evidence type="ECO:0000305" key="2"/>
<sequence>MFAVIKTGSKQYRVAKDSIIKIEKIDGEPGSTIEFKEVLMIGEYSKPSFIGTPIVKGASVTAQILNQLRNQKVIVFKKKRRKNYRNKRGHKQEVTQVKIIDIAKASNC</sequence>